<keyword id="KW-0067">ATP-binding</keyword>
<keyword id="KW-0963">Cytoplasm</keyword>
<keyword id="KW-0418">Kinase</keyword>
<keyword id="KW-0547">Nucleotide-binding</keyword>
<keyword id="KW-1185">Reference proteome</keyword>
<keyword id="KW-0808">Transferase</keyword>
<dbReference type="EC" id="2.7.4.8" evidence="1"/>
<dbReference type="EMBL" id="CR378663">
    <property type="protein sequence ID" value="CAG18630.1"/>
    <property type="molecule type" value="Genomic_DNA"/>
</dbReference>
<dbReference type="RefSeq" id="WP_011217008.1">
    <property type="nucleotide sequence ID" value="NC_006370.1"/>
</dbReference>
<dbReference type="SMR" id="Q6LVP5"/>
<dbReference type="STRING" id="298386.PBPRA0191"/>
<dbReference type="KEGG" id="ppr:PBPRA0191"/>
<dbReference type="eggNOG" id="COG0194">
    <property type="taxonomic scope" value="Bacteria"/>
</dbReference>
<dbReference type="HOGENOM" id="CLU_001715_1_0_6"/>
<dbReference type="Proteomes" id="UP000000593">
    <property type="component" value="Chromosome 1"/>
</dbReference>
<dbReference type="GO" id="GO:0005829">
    <property type="term" value="C:cytosol"/>
    <property type="evidence" value="ECO:0007669"/>
    <property type="project" value="TreeGrafter"/>
</dbReference>
<dbReference type="GO" id="GO:0005524">
    <property type="term" value="F:ATP binding"/>
    <property type="evidence" value="ECO:0007669"/>
    <property type="project" value="UniProtKB-UniRule"/>
</dbReference>
<dbReference type="GO" id="GO:0004385">
    <property type="term" value="F:guanylate kinase activity"/>
    <property type="evidence" value="ECO:0007669"/>
    <property type="project" value="UniProtKB-UniRule"/>
</dbReference>
<dbReference type="CDD" id="cd00071">
    <property type="entry name" value="GMPK"/>
    <property type="match status" value="1"/>
</dbReference>
<dbReference type="FunFam" id="3.40.50.300:FF:000855">
    <property type="entry name" value="Guanylate kinase"/>
    <property type="match status" value="1"/>
</dbReference>
<dbReference type="FunFam" id="3.30.63.10:FF:000002">
    <property type="entry name" value="Guanylate kinase 1"/>
    <property type="match status" value="1"/>
</dbReference>
<dbReference type="Gene3D" id="3.30.63.10">
    <property type="entry name" value="Guanylate Kinase phosphate binding domain"/>
    <property type="match status" value="1"/>
</dbReference>
<dbReference type="Gene3D" id="3.40.50.300">
    <property type="entry name" value="P-loop containing nucleotide triphosphate hydrolases"/>
    <property type="match status" value="1"/>
</dbReference>
<dbReference type="HAMAP" id="MF_00328">
    <property type="entry name" value="Guanylate_kinase"/>
    <property type="match status" value="1"/>
</dbReference>
<dbReference type="InterPro" id="IPR008145">
    <property type="entry name" value="GK/Ca_channel_bsu"/>
</dbReference>
<dbReference type="InterPro" id="IPR008144">
    <property type="entry name" value="Guanylate_kin-like_dom"/>
</dbReference>
<dbReference type="InterPro" id="IPR017665">
    <property type="entry name" value="Guanylate_kinase"/>
</dbReference>
<dbReference type="InterPro" id="IPR020590">
    <property type="entry name" value="Guanylate_kinase_CS"/>
</dbReference>
<dbReference type="InterPro" id="IPR027417">
    <property type="entry name" value="P-loop_NTPase"/>
</dbReference>
<dbReference type="NCBIfam" id="TIGR03263">
    <property type="entry name" value="guanyl_kin"/>
    <property type="match status" value="1"/>
</dbReference>
<dbReference type="PANTHER" id="PTHR23117:SF13">
    <property type="entry name" value="GUANYLATE KINASE"/>
    <property type="match status" value="1"/>
</dbReference>
<dbReference type="PANTHER" id="PTHR23117">
    <property type="entry name" value="GUANYLATE KINASE-RELATED"/>
    <property type="match status" value="1"/>
</dbReference>
<dbReference type="Pfam" id="PF00625">
    <property type="entry name" value="Guanylate_kin"/>
    <property type="match status" value="1"/>
</dbReference>
<dbReference type="SMART" id="SM00072">
    <property type="entry name" value="GuKc"/>
    <property type="match status" value="1"/>
</dbReference>
<dbReference type="SUPFAM" id="SSF52540">
    <property type="entry name" value="P-loop containing nucleoside triphosphate hydrolases"/>
    <property type="match status" value="1"/>
</dbReference>
<dbReference type="PROSITE" id="PS00856">
    <property type="entry name" value="GUANYLATE_KINASE_1"/>
    <property type="match status" value="1"/>
</dbReference>
<dbReference type="PROSITE" id="PS50052">
    <property type="entry name" value="GUANYLATE_KINASE_2"/>
    <property type="match status" value="1"/>
</dbReference>
<reference key="1">
    <citation type="journal article" date="2005" name="Science">
        <title>Life at depth: Photobacterium profundum genome sequence and expression analysis.</title>
        <authorList>
            <person name="Vezzi A."/>
            <person name="Campanaro S."/>
            <person name="D'Angelo M."/>
            <person name="Simonato F."/>
            <person name="Vitulo N."/>
            <person name="Lauro F.M."/>
            <person name="Cestaro A."/>
            <person name="Malacrida G."/>
            <person name="Simionati B."/>
            <person name="Cannata N."/>
            <person name="Romualdi C."/>
            <person name="Bartlett D.H."/>
            <person name="Valle G."/>
        </authorList>
    </citation>
    <scope>NUCLEOTIDE SEQUENCE [LARGE SCALE GENOMIC DNA]</scope>
    <source>
        <strain>ATCC BAA-1253 / SS9</strain>
    </source>
</reference>
<accession>Q6LVP5</accession>
<protein>
    <recommendedName>
        <fullName evidence="1">Guanylate kinase</fullName>
        <ecNumber evidence="1">2.7.4.8</ecNumber>
    </recommendedName>
    <alternativeName>
        <fullName evidence="1">GMP kinase</fullName>
    </alternativeName>
</protein>
<sequence>MSKGTLYIVSAPSGAGKSSLINALLETNPTYDMKVSVSHTTRGMRPGEENGVHYNFISVEEFTELTEQESFLEHAEVFGNYYGTSRPWIEDQLNKGIDVFLDIDWQGARQIRIQMPAAKSLFILPPSKEELERRLNARGQDSETIIARRMQEARSEISHYNEYDYVIVNDDFDAALMDFKAIIRAERLKQDKQTAKYNSMLNALLAEQ</sequence>
<comment type="function">
    <text evidence="1">Essential for recycling GMP and indirectly, cGMP.</text>
</comment>
<comment type="catalytic activity">
    <reaction evidence="1">
        <text>GMP + ATP = GDP + ADP</text>
        <dbReference type="Rhea" id="RHEA:20780"/>
        <dbReference type="ChEBI" id="CHEBI:30616"/>
        <dbReference type="ChEBI" id="CHEBI:58115"/>
        <dbReference type="ChEBI" id="CHEBI:58189"/>
        <dbReference type="ChEBI" id="CHEBI:456216"/>
        <dbReference type="EC" id="2.7.4.8"/>
    </reaction>
</comment>
<comment type="subcellular location">
    <subcellularLocation>
        <location evidence="1">Cytoplasm</location>
    </subcellularLocation>
</comment>
<comment type="similarity">
    <text evidence="1">Belongs to the guanylate kinase family.</text>
</comment>
<name>KGUA_PHOPR</name>
<evidence type="ECO:0000255" key="1">
    <source>
        <dbReference type="HAMAP-Rule" id="MF_00328"/>
    </source>
</evidence>
<gene>
    <name evidence="1" type="primary">gmk</name>
    <name type="ordered locus">PBPRA0191</name>
</gene>
<proteinExistence type="inferred from homology"/>
<organism>
    <name type="scientific">Photobacterium profundum (strain SS9)</name>
    <dbReference type="NCBI Taxonomy" id="298386"/>
    <lineage>
        <taxon>Bacteria</taxon>
        <taxon>Pseudomonadati</taxon>
        <taxon>Pseudomonadota</taxon>
        <taxon>Gammaproteobacteria</taxon>
        <taxon>Vibrionales</taxon>
        <taxon>Vibrionaceae</taxon>
        <taxon>Photobacterium</taxon>
    </lineage>
</organism>
<feature type="chain" id="PRO_0000170581" description="Guanylate kinase">
    <location>
        <begin position="1"/>
        <end position="208"/>
    </location>
</feature>
<feature type="domain" description="Guanylate kinase-like" evidence="1">
    <location>
        <begin position="4"/>
        <end position="184"/>
    </location>
</feature>
<feature type="binding site" evidence="1">
    <location>
        <begin position="11"/>
        <end position="18"/>
    </location>
    <ligand>
        <name>ATP</name>
        <dbReference type="ChEBI" id="CHEBI:30616"/>
    </ligand>
</feature>